<name>YB93_SCHPO</name>
<dbReference type="EMBL" id="CU329671">
    <property type="protein sequence ID" value="CAK9840098.1"/>
    <property type="molecule type" value="Genomic_DNA"/>
</dbReference>
<dbReference type="PIR" id="T39867">
    <property type="entry name" value="T39867"/>
</dbReference>
<dbReference type="RefSeq" id="NP_595801.1">
    <property type="nucleotide sequence ID" value="NM_001021703.2"/>
</dbReference>
<dbReference type="BioGRID" id="277213">
    <property type="interactions" value="2"/>
</dbReference>
<dbReference type="STRING" id="284812.O42968"/>
<dbReference type="PaxDb" id="4896-SPBC1E8.03c.1"/>
<dbReference type="EnsemblFungi" id="SPBC1E8.03c.1">
    <property type="protein sequence ID" value="SPBC1E8.03c.1:pep"/>
    <property type="gene ID" value="SPBC1E8.03c"/>
</dbReference>
<dbReference type="KEGG" id="spo:2540688"/>
<dbReference type="PomBase" id="SPBC1E8.03c"/>
<dbReference type="VEuPathDB" id="FungiDB:SPBC1E8.03c"/>
<dbReference type="HOGENOM" id="CLU_545319_0_0_1"/>
<dbReference type="InParanoid" id="O42968"/>
<dbReference type="OMA" id="PPNDYTY"/>
<dbReference type="PRO" id="PR:O42968"/>
<dbReference type="Proteomes" id="UP000002485">
    <property type="component" value="Chromosome II"/>
</dbReference>
<dbReference type="GO" id="GO:0005783">
    <property type="term" value="C:endoplasmic reticulum"/>
    <property type="evidence" value="ECO:0007005"/>
    <property type="project" value="PomBase"/>
</dbReference>
<dbReference type="GO" id="GO:0016020">
    <property type="term" value="C:membrane"/>
    <property type="evidence" value="ECO:0007669"/>
    <property type="project" value="UniProtKB-KW"/>
</dbReference>
<reference key="1">
    <citation type="journal article" date="2002" name="Nature">
        <title>The genome sequence of Schizosaccharomyces pombe.</title>
        <authorList>
            <person name="Wood V."/>
            <person name="Gwilliam R."/>
            <person name="Rajandream M.A."/>
            <person name="Lyne M.H."/>
            <person name="Lyne R."/>
            <person name="Stewart A."/>
            <person name="Sgouros J.G."/>
            <person name="Peat N."/>
            <person name="Hayles J."/>
            <person name="Baker S.G."/>
            <person name="Basham D."/>
            <person name="Bowman S."/>
            <person name="Brooks K."/>
            <person name="Brown D."/>
            <person name="Brown S."/>
            <person name="Chillingworth T."/>
            <person name="Churcher C.M."/>
            <person name="Collins M."/>
            <person name="Connor R."/>
            <person name="Cronin A."/>
            <person name="Davis P."/>
            <person name="Feltwell T."/>
            <person name="Fraser A."/>
            <person name="Gentles S."/>
            <person name="Goble A."/>
            <person name="Hamlin N."/>
            <person name="Harris D.E."/>
            <person name="Hidalgo J."/>
            <person name="Hodgson G."/>
            <person name="Holroyd S."/>
            <person name="Hornsby T."/>
            <person name="Howarth S."/>
            <person name="Huckle E.J."/>
            <person name="Hunt S."/>
            <person name="Jagels K."/>
            <person name="James K.D."/>
            <person name="Jones L."/>
            <person name="Jones M."/>
            <person name="Leather S."/>
            <person name="McDonald S."/>
            <person name="McLean J."/>
            <person name="Mooney P."/>
            <person name="Moule S."/>
            <person name="Mungall K.L."/>
            <person name="Murphy L.D."/>
            <person name="Niblett D."/>
            <person name="Odell C."/>
            <person name="Oliver K."/>
            <person name="O'Neil S."/>
            <person name="Pearson D."/>
            <person name="Quail M.A."/>
            <person name="Rabbinowitsch E."/>
            <person name="Rutherford K.M."/>
            <person name="Rutter S."/>
            <person name="Saunders D."/>
            <person name="Seeger K."/>
            <person name="Sharp S."/>
            <person name="Skelton J."/>
            <person name="Simmonds M.N."/>
            <person name="Squares R."/>
            <person name="Squares S."/>
            <person name="Stevens K."/>
            <person name="Taylor K."/>
            <person name="Taylor R.G."/>
            <person name="Tivey A."/>
            <person name="Walsh S.V."/>
            <person name="Warren T."/>
            <person name="Whitehead S."/>
            <person name="Woodward J.R."/>
            <person name="Volckaert G."/>
            <person name="Aert R."/>
            <person name="Robben J."/>
            <person name="Grymonprez B."/>
            <person name="Weltjens I."/>
            <person name="Vanstreels E."/>
            <person name="Rieger M."/>
            <person name="Schaefer M."/>
            <person name="Mueller-Auer S."/>
            <person name="Gabel C."/>
            <person name="Fuchs M."/>
            <person name="Duesterhoeft A."/>
            <person name="Fritzc C."/>
            <person name="Holzer E."/>
            <person name="Moestl D."/>
            <person name="Hilbert H."/>
            <person name="Borzym K."/>
            <person name="Langer I."/>
            <person name="Beck A."/>
            <person name="Lehrach H."/>
            <person name="Reinhardt R."/>
            <person name="Pohl T.M."/>
            <person name="Eger P."/>
            <person name="Zimmermann W."/>
            <person name="Wedler H."/>
            <person name="Wambutt R."/>
            <person name="Purnelle B."/>
            <person name="Goffeau A."/>
            <person name="Cadieu E."/>
            <person name="Dreano S."/>
            <person name="Gloux S."/>
            <person name="Lelaure V."/>
            <person name="Mottier S."/>
            <person name="Galibert F."/>
            <person name="Aves S.J."/>
            <person name="Xiang Z."/>
            <person name="Hunt C."/>
            <person name="Moore K."/>
            <person name="Hurst S.M."/>
            <person name="Lucas M."/>
            <person name="Rochet M."/>
            <person name="Gaillardin C."/>
            <person name="Tallada V.A."/>
            <person name="Garzon A."/>
            <person name="Thode G."/>
            <person name="Daga R.R."/>
            <person name="Cruzado L."/>
            <person name="Jimenez J."/>
            <person name="Sanchez M."/>
            <person name="del Rey F."/>
            <person name="Benito J."/>
            <person name="Dominguez A."/>
            <person name="Revuelta J.L."/>
            <person name="Moreno S."/>
            <person name="Armstrong J."/>
            <person name="Forsburg S.L."/>
            <person name="Cerutti L."/>
            <person name="Lowe T."/>
            <person name="McCombie W.R."/>
            <person name="Paulsen I."/>
            <person name="Potashkin J."/>
            <person name="Shpakovski G.V."/>
            <person name="Ussery D."/>
            <person name="Barrell B.G."/>
            <person name="Nurse P."/>
        </authorList>
    </citation>
    <scope>NUCLEOTIDE SEQUENCE [LARGE SCALE GENOMIC DNA]</scope>
    <source>
        <strain>972 / ATCC 24843</strain>
    </source>
</reference>
<reference key="2">
    <citation type="journal article" date="2006" name="Nat. Biotechnol.">
        <title>ORFeome cloning and global analysis of protein localization in the fission yeast Schizosaccharomyces pombe.</title>
        <authorList>
            <person name="Matsuyama A."/>
            <person name="Arai R."/>
            <person name="Yashiroda Y."/>
            <person name="Shirai A."/>
            <person name="Kamata A."/>
            <person name="Sekido S."/>
            <person name="Kobayashi Y."/>
            <person name="Hashimoto A."/>
            <person name="Hamamoto M."/>
            <person name="Hiraoka Y."/>
            <person name="Horinouchi S."/>
            <person name="Yoshida M."/>
        </authorList>
    </citation>
    <scope>SUBCELLULAR LOCATION [LARGE SCALE ANALYSIS]</scope>
</reference>
<sequence>MVVIANKGALWAYYCKRLLNSVTYMMYPLIRKRTMKKLLLIVGLLLACSTVMRRIPLFHESFHLPSLDPRASTTTSQKFQEYRSDFLEKLETAEPPEDVIMFTAYGLGVHTHNLFMLACDMAKTSDSQIRFLLLTDGTILPEALYDYNRETVSTCPLSFLSYSTGVERLSKELILKDLLSLQFQQALLAISPSVIVTSEHSPLVMFQAINPYLNNNYYTHDTVDTNALEENSWITKLDMQSLQHFRTPRINVVLIVEDGTYKYLLNLMRDLGRDFKNSEEYPHLFIHLFMSENIPNLSSIRANWPQHRLFINLHFNQKDLNLIEVWTPPNDYTYALVVDLQPDSPPQLSSNLITWLKYKILLIYYHKSSSTYKNNIAAIVPSFDFSNEEAVILSQTINSNIVLFAPVVFQKFQEYMAVRLLNPNFELPESNGIEFAHEDSVLGHSKPSLTEFHAILGLYSLVISYNHFEGSLSNELRLDNLIAYFLKNPSVINFEEISEKNLYFTYDSKRLSFQGAKNESKKLYNSVTSCPYYGSLSSFPIRSIFCEPLM</sequence>
<proteinExistence type="inferred from homology"/>
<comment type="subcellular location">
    <subcellularLocation>
        <location evidence="3">Endoplasmic reticulum</location>
    </subcellularLocation>
</comment>
<evidence type="ECO:0000255" key="1"/>
<evidence type="ECO:0000255" key="2">
    <source>
        <dbReference type="PROSITE-ProRule" id="PRU00498"/>
    </source>
</evidence>
<evidence type="ECO:0000269" key="3">
    <source>
    </source>
</evidence>
<evidence type="ECO:0000312" key="4">
    <source>
        <dbReference type="PomBase" id="SPBC1E8.03c"/>
    </source>
</evidence>
<accession>O42968</accession>
<accession>A0AAN2H995</accession>
<organism>
    <name type="scientific">Schizosaccharomyces pombe (strain 972 / ATCC 24843)</name>
    <name type="common">Fission yeast</name>
    <dbReference type="NCBI Taxonomy" id="284812"/>
    <lineage>
        <taxon>Eukaryota</taxon>
        <taxon>Fungi</taxon>
        <taxon>Dikarya</taxon>
        <taxon>Ascomycota</taxon>
        <taxon>Taphrinomycotina</taxon>
        <taxon>Schizosaccharomycetes</taxon>
        <taxon>Schizosaccharomycetales</taxon>
        <taxon>Schizosaccharomycetaceae</taxon>
        <taxon>Schizosaccharomyces</taxon>
    </lineage>
</organism>
<gene>
    <name evidence="4" type="ORF">SPBC1E8.03c</name>
</gene>
<feature type="signal peptide" evidence="1">
    <location>
        <begin position="1"/>
        <end position="53"/>
    </location>
</feature>
<feature type="chain" id="PRO_0000372349" description="Uncharacterized protein SPBC1E8.03c" evidence="1">
    <location>
        <begin position="54"/>
        <end position="550"/>
    </location>
</feature>
<feature type="glycosylation site" description="N-linked (GlcNAc...) asparagine" evidence="2">
    <location>
        <position position="296"/>
    </location>
</feature>
<feature type="glycosylation site" description="N-linked (GlcNAc...) asparagine" evidence="2">
    <location>
        <position position="518"/>
    </location>
</feature>
<protein>
    <recommendedName>
        <fullName>Uncharacterized protein SPBC1E8.03c</fullName>
    </recommendedName>
</protein>
<keyword id="KW-0256">Endoplasmic reticulum</keyword>
<keyword id="KW-0325">Glycoprotein</keyword>
<keyword id="KW-1185">Reference proteome</keyword>
<keyword id="KW-0732">Signal</keyword>